<reference key="1">
    <citation type="submission" date="2002-12" db="EMBL/GenBank/DDBJ databases">
        <title>Complete genome sequence of Vibrio vulnificus CMCP6.</title>
        <authorList>
            <person name="Rhee J.H."/>
            <person name="Kim S.Y."/>
            <person name="Chung S.S."/>
            <person name="Kim J.J."/>
            <person name="Moon Y.H."/>
            <person name="Jeong H."/>
            <person name="Choy H.E."/>
        </authorList>
    </citation>
    <scope>NUCLEOTIDE SEQUENCE [LARGE SCALE GENOMIC DNA]</scope>
    <source>
        <strain>CMCP6</strain>
    </source>
</reference>
<sequence length="239" mass="27594">MSEVTTNEYNEDGKLIRKIRSFVRREGRLTKGQENAMKECWPTMGIDYQKQLLDWKEVFGNDNPVVLEIGFGMGASLVEMAKNAPEKNFFGIEVHSPGVGACLSDAREAGISNLRVMCHDAVEVFEHMIPNDSLATLQLFFPDPWHKKRHHKRRIVQLEFAEMVRQKLIPNEGIFHMATDWENYAEHMIEIMNQAPGYRNIAEAGDYIPRPEERPLTKFEARGHRLGHGVWDIKFKRVS</sequence>
<dbReference type="EC" id="2.1.1.33" evidence="2"/>
<dbReference type="EMBL" id="AE016795">
    <property type="protein sequence ID" value="AAO09942.1"/>
    <property type="molecule type" value="Genomic_DNA"/>
</dbReference>
<dbReference type="RefSeq" id="WP_011079452.1">
    <property type="nucleotide sequence ID" value="NC_004459.3"/>
</dbReference>
<dbReference type="SMR" id="Q8DCC3"/>
<dbReference type="KEGG" id="vvu:VV1_1516"/>
<dbReference type="HOGENOM" id="CLU_050910_0_1_6"/>
<dbReference type="UniPathway" id="UPA00989"/>
<dbReference type="Proteomes" id="UP000002275">
    <property type="component" value="Chromosome 1"/>
</dbReference>
<dbReference type="GO" id="GO:0043527">
    <property type="term" value="C:tRNA methyltransferase complex"/>
    <property type="evidence" value="ECO:0007669"/>
    <property type="project" value="TreeGrafter"/>
</dbReference>
<dbReference type="GO" id="GO:0008176">
    <property type="term" value="F:tRNA (guanine(46)-N7)-methyltransferase activity"/>
    <property type="evidence" value="ECO:0007669"/>
    <property type="project" value="UniProtKB-UniRule"/>
</dbReference>
<dbReference type="FunFam" id="3.40.50.150:FF:000024">
    <property type="entry name" value="tRNA (guanine-N(7)-)-methyltransferase"/>
    <property type="match status" value="1"/>
</dbReference>
<dbReference type="Gene3D" id="3.40.50.150">
    <property type="entry name" value="Vaccinia Virus protein VP39"/>
    <property type="match status" value="1"/>
</dbReference>
<dbReference type="HAMAP" id="MF_01057">
    <property type="entry name" value="tRNA_methyltr_TrmB"/>
    <property type="match status" value="1"/>
</dbReference>
<dbReference type="InterPro" id="IPR029063">
    <property type="entry name" value="SAM-dependent_MTases_sf"/>
</dbReference>
<dbReference type="InterPro" id="IPR003358">
    <property type="entry name" value="tRNA_(Gua-N-7)_MeTrfase_Trmb"/>
</dbReference>
<dbReference type="InterPro" id="IPR055361">
    <property type="entry name" value="tRNA_methyltr_TrmB_bact"/>
</dbReference>
<dbReference type="NCBIfam" id="TIGR00091">
    <property type="entry name" value="tRNA (guanosine(46)-N7)-methyltransferase TrmB"/>
    <property type="match status" value="1"/>
</dbReference>
<dbReference type="PANTHER" id="PTHR23417">
    <property type="entry name" value="3-DEOXY-D-MANNO-OCTULOSONIC-ACID TRANSFERASE/TRNA GUANINE-N 7 - -METHYLTRANSFERASE"/>
    <property type="match status" value="1"/>
</dbReference>
<dbReference type="PANTHER" id="PTHR23417:SF14">
    <property type="entry name" value="PENTACOTRIPEPTIDE-REPEAT REGION OF PRORP DOMAIN-CONTAINING PROTEIN"/>
    <property type="match status" value="1"/>
</dbReference>
<dbReference type="Pfam" id="PF02390">
    <property type="entry name" value="Methyltransf_4"/>
    <property type="match status" value="1"/>
</dbReference>
<dbReference type="SUPFAM" id="SSF53335">
    <property type="entry name" value="S-adenosyl-L-methionine-dependent methyltransferases"/>
    <property type="match status" value="1"/>
</dbReference>
<dbReference type="PROSITE" id="PS51625">
    <property type="entry name" value="SAM_MT_TRMB"/>
    <property type="match status" value="1"/>
</dbReference>
<organism>
    <name type="scientific">Vibrio vulnificus (strain CMCP6)</name>
    <dbReference type="NCBI Taxonomy" id="216895"/>
    <lineage>
        <taxon>Bacteria</taxon>
        <taxon>Pseudomonadati</taxon>
        <taxon>Pseudomonadota</taxon>
        <taxon>Gammaproteobacteria</taxon>
        <taxon>Vibrionales</taxon>
        <taxon>Vibrionaceae</taxon>
        <taxon>Vibrio</taxon>
    </lineage>
</organism>
<gene>
    <name evidence="2" type="primary">trmB</name>
    <name type="ordered locus">VV1_1516</name>
</gene>
<name>TRMB_VIBVU</name>
<protein>
    <recommendedName>
        <fullName evidence="2">tRNA (guanine-N(7)-)-methyltransferase</fullName>
        <ecNumber evidence="2">2.1.1.33</ecNumber>
    </recommendedName>
    <alternativeName>
        <fullName evidence="2">tRNA (guanine(46)-N(7))-methyltransferase</fullName>
    </alternativeName>
    <alternativeName>
        <fullName evidence="2">tRNA(m7G46)-methyltransferase</fullName>
    </alternativeName>
</protein>
<comment type="function">
    <text evidence="2">Catalyzes the formation of N(7)-methylguanine at position 46 (m7G46) in tRNA.</text>
</comment>
<comment type="catalytic activity">
    <reaction evidence="2">
        <text>guanosine(46) in tRNA + S-adenosyl-L-methionine = N(7)-methylguanosine(46) in tRNA + S-adenosyl-L-homocysteine</text>
        <dbReference type="Rhea" id="RHEA:42708"/>
        <dbReference type="Rhea" id="RHEA-COMP:10188"/>
        <dbReference type="Rhea" id="RHEA-COMP:10189"/>
        <dbReference type="ChEBI" id="CHEBI:57856"/>
        <dbReference type="ChEBI" id="CHEBI:59789"/>
        <dbReference type="ChEBI" id="CHEBI:74269"/>
        <dbReference type="ChEBI" id="CHEBI:74480"/>
        <dbReference type="EC" id="2.1.1.33"/>
    </reaction>
</comment>
<comment type="pathway">
    <text evidence="2">tRNA modification; N(7)-methylguanine-tRNA biosynthesis.</text>
</comment>
<comment type="similarity">
    <text evidence="2">Belongs to the class I-like SAM-binding methyltransferase superfamily. TrmB family.</text>
</comment>
<proteinExistence type="inferred from homology"/>
<feature type="chain" id="PRO_0000171420" description="tRNA (guanine-N(7)-)-methyltransferase">
    <location>
        <begin position="1"/>
        <end position="239"/>
    </location>
</feature>
<feature type="active site" evidence="1">
    <location>
        <position position="143"/>
    </location>
</feature>
<feature type="binding site" evidence="2">
    <location>
        <position position="68"/>
    </location>
    <ligand>
        <name>S-adenosyl-L-methionine</name>
        <dbReference type="ChEBI" id="CHEBI:59789"/>
    </ligand>
</feature>
<feature type="binding site" evidence="2">
    <location>
        <position position="93"/>
    </location>
    <ligand>
        <name>S-adenosyl-L-methionine</name>
        <dbReference type="ChEBI" id="CHEBI:59789"/>
    </ligand>
</feature>
<feature type="binding site" evidence="2">
    <location>
        <position position="120"/>
    </location>
    <ligand>
        <name>S-adenosyl-L-methionine</name>
        <dbReference type="ChEBI" id="CHEBI:59789"/>
    </ligand>
</feature>
<feature type="binding site" evidence="2">
    <location>
        <position position="143"/>
    </location>
    <ligand>
        <name>S-adenosyl-L-methionine</name>
        <dbReference type="ChEBI" id="CHEBI:59789"/>
    </ligand>
</feature>
<feature type="binding site" evidence="2">
    <location>
        <position position="147"/>
    </location>
    <ligand>
        <name>substrate</name>
    </ligand>
</feature>
<feature type="binding site" evidence="2">
    <location>
        <position position="180"/>
    </location>
    <ligand>
        <name>substrate</name>
    </ligand>
</feature>
<feature type="binding site" evidence="2">
    <location>
        <begin position="217"/>
        <end position="220"/>
    </location>
    <ligand>
        <name>substrate</name>
    </ligand>
</feature>
<accession>Q8DCC3</accession>
<evidence type="ECO:0000250" key="1"/>
<evidence type="ECO:0000255" key="2">
    <source>
        <dbReference type="HAMAP-Rule" id="MF_01057"/>
    </source>
</evidence>
<keyword id="KW-0489">Methyltransferase</keyword>
<keyword id="KW-0949">S-adenosyl-L-methionine</keyword>
<keyword id="KW-0808">Transferase</keyword>
<keyword id="KW-0819">tRNA processing</keyword>